<reference key="1">
    <citation type="journal article" date="2008" name="PLoS ONE">
        <title>Survival in nuclear waste, extreme resistance, and potential applications gleaned from the genome sequence of Kineococcus radiotolerans SRS30216.</title>
        <authorList>
            <person name="Bagwell C.E."/>
            <person name="Bhat S."/>
            <person name="Hawkins G.M."/>
            <person name="Smith B.W."/>
            <person name="Biswas T."/>
            <person name="Hoover T.R."/>
            <person name="Saunders E."/>
            <person name="Han C.S."/>
            <person name="Tsodikov O.V."/>
            <person name="Shimkets L.J."/>
        </authorList>
    </citation>
    <scope>NUCLEOTIDE SEQUENCE [LARGE SCALE GENOMIC DNA]</scope>
    <source>
        <strain>ATCC BAA-149 / DSM 14245 / SRS30216</strain>
    </source>
</reference>
<sequence>MSATVLDGKAAAAAVKADLKERVAALRERGVVPGLGTVLVGDDPGSASYVRGKHRDCAEVGIASIQVELPATATQGEIESEIAQLNANPDCTGFIVQLPLPAGIDANRILEQVDPDKDADGLHPTNLGRLVLRVREEITSPLPCTPRGVIDLLLRHDVPLDGAEVVVVGRGVTVGRPIGLLLTRRHPNATVTLCHTGTRDLESHLRRADVIVAAAGVAGLVTKENVKPGAAVLDVGVSRVLDPATGKSKLAGDVALDVAEVAGFVAPNPGGVGPMTRALLLTNVVESAERAAGLR</sequence>
<name>FOLD_KINRD</name>
<feature type="chain" id="PRO_1000087905" description="Bifunctional protein FolD">
    <location>
        <begin position="1"/>
        <end position="295"/>
    </location>
</feature>
<feature type="binding site" evidence="1">
    <location>
        <begin position="169"/>
        <end position="171"/>
    </location>
    <ligand>
        <name>NADP(+)</name>
        <dbReference type="ChEBI" id="CHEBI:58349"/>
    </ligand>
</feature>
<feature type="binding site" evidence="1">
    <location>
        <position position="196"/>
    </location>
    <ligand>
        <name>NADP(+)</name>
        <dbReference type="ChEBI" id="CHEBI:58349"/>
    </ligand>
</feature>
<feature type="binding site" evidence="1">
    <location>
        <position position="237"/>
    </location>
    <ligand>
        <name>NADP(+)</name>
        <dbReference type="ChEBI" id="CHEBI:58349"/>
    </ligand>
</feature>
<comment type="function">
    <text evidence="1">Catalyzes the oxidation of 5,10-methylenetetrahydrofolate to 5,10-methenyltetrahydrofolate and then the hydrolysis of 5,10-methenyltetrahydrofolate to 10-formyltetrahydrofolate.</text>
</comment>
<comment type="catalytic activity">
    <reaction evidence="1">
        <text>(6R)-5,10-methylene-5,6,7,8-tetrahydrofolate + NADP(+) = (6R)-5,10-methenyltetrahydrofolate + NADPH</text>
        <dbReference type="Rhea" id="RHEA:22812"/>
        <dbReference type="ChEBI" id="CHEBI:15636"/>
        <dbReference type="ChEBI" id="CHEBI:57455"/>
        <dbReference type="ChEBI" id="CHEBI:57783"/>
        <dbReference type="ChEBI" id="CHEBI:58349"/>
        <dbReference type="EC" id="1.5.1.5"/>
    </reaction>
</comment>
<comment type="catalytic activity">
    <reaction evidence="1">
        <text>(6R)-5,10-methenyltetrahydrofolate + H2O = (6R)-10-formyltetrahydrofolate + H(+)</text>
        <dbReference type="Rhea" id="RHEA:23700"/>
        <dbReference type="ChEBI" id="CHEBI:15377"/>
        <dbReference type="ChEBI" id="CHEBI:15378"/>
        <dbReference type="ChEBI" id="CHEBI:57455"/>
        <dbReference type="ChEBI" id="CHEBI:195366"/>
        <dbReference type="EC" id="3.5.4.9"/>
    </reaction>
</comment>
<comment type="pathway">
    <text evidence="1">One-carbon metabolism; tetrahydrofolate interconversion.</text>
</comment>
<comment type="subunit">
    <text evidence="1">Homodimer.</text>
</comment>
<comment type="similarity">
    <text evidence="1">Belongs to the tetrahydrofolate dehydrogenase/cyclohydrolase family.</text>
</comment>
<proteinExistence type="inferred from homology"/>
<organism>
    <name type="scientific">Kineococcus radiotolerans (strain ATCC BAA-149 / DSM 14245 / SRS30216)</name>
    <dbReference type="NCBI Taxonomy" id="266940"/>
    <lineage>
        <taxon>Bacteria</taxon>
        <taxon>Bacillati</taxon>
        <taxon>Actinomycetota</taxon>
        <taxon>Actinomycetes</taxon>
        <taxon>Kineosporiales</taxon>
        <taxon>Kineosporiaceae</taxon>
        <taxon>Kineococcus</taxon>
    </lineage>
</organism>
<dbReference type="EC" id="1.5.1.5" evidence="1"/>
<dbReference type="EC" id="3.5.4.9" evidence="1"/>
<dbReference type="EMBL" id="CP000750">
    <property type="protein sequence ID" value="ABS05443.1"/>
    <property type="molecule type" value="Genomic_DNA"/>
</dbReference>
<dbReference type="RefSeq" id="WP_012086271.1">
    <property type="nucleotide sequence ID" value="NC_009664.2"/>
</dbReference>
<dbReference type="SMR" id="A6WF54"/>
<dbReference type="STRING" id="266940.Krad_3980"/>
<dbReference type="KEGG" id="kra:Krad_3980"/>
<dbReference type="eggNOG" id="COG0190">
    <property type="taxonomic scope" value="Bacteria"/>
</dbReference>
<dbReference type="HOGENOM" id="CLU_034045_3_0_11"/>
<dbReference type="OrthoDB" id="9803580at2"/>
<dbReference type="UniPathway" id="UPA00193"/>
<dbReference type="Proteomes" id="UP000001116">
    <property type="component" value="Chromosome"/>
</dbReference>
<dbReference type="GO" id="GO:0005829">
    <property type="term" value="C:cytosol"/>
    <property type="evidence" value="ECO:0007669"/>
    <property type="project" value="TreeGrafter"/>
</dbReference>
<dbReference type="GO" id="GO:0004477">
    <property type="term" value="F:methenyltetrahydrofolate cyclohydrolase activity"/>
    <property type="evidence" value="ECO:0007669"/>
    <property type="project" value="UniProtKB-UniRule"/>
</dbReference>
<dbReference type="GO" id="GO:0004488">
    <property type="term" value="F:methylenetetrahydrofolate dehydrogenase (NADP+) activity"/>
    <property type="evidence" value="ECO:0007669"/>
    <property type="project" value="UniProtKB-UniRule"/>
</dbReference>
<dbReference type="GO" id="GO:0000105">
    <property type="term" value="P:L-histidine biosynthetic process"/>
    <property type="evidence" value="ECO:0007669"/>
    <property type="project" value="UniProtKB-KW"/>
</dbReference>
<dbReference type="GO" id="GO:0009086">
    <property type="term" value="P:methionine biosynthetic process"/>
    <property type="evidence" value="ECO:0007669"/>
    <property type="project" value="UniProtKB-KW"/>
</dbReference>
<dbReference type="GO" id="GO:0006164">
    <property type="term" value="P:purine nucleotide biosynthetic process"/>
    <property type="evidence" value="ECO:0007669"/>
    <property type="project" value="UniProtKB-KW"/>
</dbReference>
<dbReference type="GO" id="GO:0035999">
    <property type="term" value="P:tetrahydrofolate interconversion"/>
    <property type="evidence" value="ECO:0007669"/>
    <property type="project" value="UniProtKB-UniRule"/>
</dbReference>
<dbReference type="CDD" id="cd01080">
    <property type="entry name" value="NAD_bind_m-THF_DH_Cyclohyd"/>
    <property type="match status" value="1"/>
</dbReference>
<dbReference type="FunFam" id="3.40.50.10860:FF:000005">
    <property type="entry name" value="C-1-tetrahydrofolate synthase, cytoplasmic, putative"/>
    <property type="match status" value="1"/>
</dbReference>
<dbReference type="Gene3D" id="3.40.50.10860">
    <property type="entry name" value="Leucine Dehydrogenase, chain A, domain 1"/>
    <property type="match status" value="1"/>
</dbReference>
<dbReference type="Gene3D" id="3.40.50.720">
    <property type="entry name" value="NAD(P)-binding Rossmann-like Domain"/>
    <property type="match status" value="1"/>
</dbReference>
<dbReference type="HAMAP" id="MF_01576">
    <property type="entry name" value="THF_DHG_CYH"/>
    <property type="match status" value="1"/>
</dbReference>
<dbReference type="InterPro" id="IPR046346">
    <property type="entry name" value="Aminoacid_DH-like_N_sf"/>
</dbReference>
<dbReference type="InterPro" id="IPR036291">
    <property type="entry name" value="NAD(P)-bd_dom_sf"/>
</dbReference>
<dbReference type="InterPro" id="IPR000672">
    <property type="entry name" value="THF_DH/CycHdrlase"/>
</dbReference>
<dbReference type="InterPro" id="IPR020630">
    <property type="entry name" value="THF_DH/CycHdrlase_cat_dom"/>
</dbReference>
<dbReference type="InterPro" id="IPR020631">
    <property type="entry name" value="THF_DH/CycHdrlase_NAD-bd_dom"/>
</dbReference>
<dbReference type="NCBIfam" id="NF010789">
    <property type="entry name" value="PRK14193.1"/>
    <property type="match status" value="1"/>
</dbReference>
<dbReference type="PANTHER" id="PTHR48099:SF5">
    <property type="entry name" value="C-1-TETRAHYDROFOLATE SYNTHASE, CYTOPLASMIC"/>
    <property type="match status" value="1"/>
</dbReference>
<dbReference type="PANTHER" id="PTHR48099">
    <property type="entry name" value="C-1-TETRAHYDROFOLATE SYNTHASE, CYTOPLASMIC-RELATED"/>
    <property type="match status" value="1"/>
</dbReference>
<dbReference type="Pfam" id="PF00763">
    <property type="entry name" value="THF_DHG_CYH"/>
    <property type="match status" value="1"/>
</dbReference>
<dbReference type="Pfam" id="PF02882">
    <property type="entry name" value="THF_DHG_CYH_C"/>
    <property type="match status" value="1"/>
</dbReference>
<dbReference type="PRINTS" id="PR00085">
    <property type="entry name" value="THFDHDRGNASE"/>
</dbReference>
<dbReference type="SUPFAM" id="SSF53223">
    <property type="entry name" value="Aminoacid dehydrogenase-like, N-terminal domain"/>
    <property type="match status" value="1"/>
</dbReference>
<dbReference type="SUPFAM" id="SSF51735">
    <property type="entry name" value="NAD(P)-binding Rossmann-fold domains"/>
    <property type="match status" value="1"/>
</dbReference>
<gene>
    <name evidence="1" type="primary">folD</name>
    <name type="ordered locus">Krad_3980</name>
</gene>
<accession>A6WF54</accession>
<evidence type="ECO:0000255" key="1">
    <source>
        <dbReference type="HAMAP-Rule" id="MF_01576"/>
    </source>
</evidence>
<keyword id="KW-0028">Amino-acid biosynthesis</keyword>
<keyword id="KW-0368">Histidine biosynthesis</keyword>
<keyword id="KW-0378">Hydrolase</keyword>
<keyword id="KW-0486">Methionine biosynthesis</keyword>
<keyword id="KW-0511">Multifunctional enzyme</keyword>
<keyword id="KW-0521">NADP</keyword>
<keyword id="KW-0554">One-carbon metabolism</keyword>
<keyword id="KW-0560">Oxidoreductase</keyword>
<keyword id="KW-0658">Purine biosynthesis</keyword>
<keyword id="KW-1185">Reference proteome</keyword>
<protein>
    <recommendedName>
        <fullName evidence="1">Bifunctional protein FolD</fullName>
    </recommendedName>
    <domain>
        <recommendedName>
            <fullName evidence="1">Methylenetetrahydrofolate dehydrogenase</fullName>
            <ecNumber evidence="1">1.5.1.5</ecNumber>
        </recommendedName>
    </domain>
    <domain>
        <recommendedName>
            <fullName evidence="1">Methenyltetrahydrofolate cyclohydrolase</fullName>
            <ecNumber evidence="1">3.5.4.9</ecNumber>
        </recommendedName>
    </domain>
</protein>